<dbReference type="EC" id="2.4.1.-" evidence="2"/>
<dbReference type="EMBL" id="AE014075">
    <property type="protein sequence ID" value="AAN79787.1"/>
    <property type="status" value="ALT_INIT"/>
    <property type="molecule type" value="Genomic_DNA"/>
</dbReference>
<dbReference type="RefSeq" id="WP_001304473.1">
    <property type="nucleotide sequence ID" value="NZ_CP051263.1"/>
</dbReference>
<dbReference type="STRING" id="199310.c1314"/>
<dbReference type="CAZy" id="GT2">
    <property type="family name" value="Glycosyltransferase Family 2"/>
</dbReference>
<dbReference type="KEGG" id="ecc:c1314"/>
<dbReference type="eggNOG" id="COG2943">
    <property type="taxonomic scope" value="Bacteria"/>
</dbReference>
<dbReference type="HOGENOM" id="CLU_015730_0_0_6"/>
<dbReference type="UniPathway" id="UPA00637"/>
<dbReference type="Proteomes" id="UP000001410">
    <property type="component" value="Chromosome"/>
</dbReference>
<dbReference type="GO" id="GO:0005886">
    <property type="term" value="C:plasma membrane"/>
    <property type="evidence" value="ECO:0007669"/>
    <property type="project" value="UniProtKB-SubCell"/>
</dbReference>
<dbReference type="GO" id="GO:0016758">
    <property type="term" value="F:hexosyltransferase activity"/>
    <property type="evidence" value="ECO:0007669"/>
    <property type="project" value="UniProtKB-UniRule"/>
</dbReference>
<dbReference type="GO" id="GO:0009250">
    <property type="term" value="P:glucan biosynthetic process"/>
    <property type="evidence" value="ECO:0007669"/>
    <property type="project" value="UniProtKB-UniRule"/>
</dbReference>
<dbReference type="CDD" id="cd04191">
    <property type="entry name" value="Glucan_BSP_MdoH"/>
    <property type="match status" value="1"/>
</dbReference>
<dbReference type="FunFam" id="3.90.550.10:FF:000047">
    <property type="entry name" value="Glucans biosynthesis glucosyltransferase H"/>
    <property type="match status" value="1"/>
</dbReference>
<dbReference type="Gene3D" id="3.90.550.10">
    <property type="entry name" value="Spore Coat Polysaccharide Biosynthesis Protein SpsA, Chain A"/>
    <property type="match status" value="1"/>
</dbReference>
<dbReference type="HAMAP" id="MF_01072">
    <property type="entry name" value="MdoH_OpgH"/>
    <property type="match status" value="1"/>
</dbReference>
<dbReference type="InterPro" id="IPR023725">
    <property type="entry name" value="Glucans_biosynth_gluTrFase_H"/>
</dbReference>
<dbReference type="InterPro" id="IPR001173">
    <property type="entry name" value="Glyco_trans_2-like"/>
</dbReference>
<dbReference type="InterPro" id="IPR050321">
    <property type="entry name" value="Glycosyltr_2/OpgH_subfam"/>
</dbReference>
<dbReference type="InterPro" id="IPR029044">
    <property type="entry name" value="Nucleotide-diphossugar_trans"/>
</dbReference>
<dbReference type="NCBIfam" id="NF003955">
    <property type="entry name" value="PRK05454.1-1"/>
    <property type="match status" value="1"/>
</dbReference>
<dbReference type="NCBIfam" id="NF003958">
    <property type="entry name" value="PRK05454.2-1"/>
    <property type="match status" value="1"/>
</dbReference>
<dbReference type="NCBIfam" id="NF003962">
    <property type="entry name" value="PRK05454.2-5"/>
    <property type="match status" value="1"/>
</dbReference>
<dbReference type="PANTHER" id="PTHR43867">
    <property type="entry name" value="CELLULOSE SYNTHASE CATALYTIC SUBUNIT A [UDP-FORMING]"/>
    <property type="match status" value="1"/>
</dbReference>
<dbReference type="PANTHER" id="PTHR43867:SF5">
    <property type="entry name" value="GLUCANS BIOSYNTHESIS GLUCOSYLTRANSFERASE H"/>
    <property type="match status" value="1"/>
</dbReference>
<dbReference type="Pfam" id="PF00535">
    <property type="entry name" value="Glycos_transf_2"/>
    <property type="match status" value="1"/>
</dbReference>
<dbReference type="SUPFAM" id="SSF53448">
    <property type="entry name" value="Nucleotide-diphospho-sugar transferases"/>
    <property type="match status" value="1"/>
</dbReference>
<proteinExistence type="inferred from homology"/>
<protein>
    <recommendedName>
        <fullName evidence="2">Glucans biosynthesis glucosyltransferase H</fullName>
        <ecNumber evidence="2">2.4.1.-</ecNumber>
    </recommendedName>
</protein>
<accession>Q8FIS3</accession>
<comment type="function">
    <text evidence="2">Involved in the biosynthesis of osmoregulated periplasmic glucans (OPGs).</text>
</comment>
<comment type="pathway">
    <text evidence="2">Glycan metabolism; osmoregulated periplasmic glucan (OPG) biosynthesis.</text>
</comment>
<comment type="subcellular location">
    <subcellularLocation>
        <location evidence="2">Cell inner membrane</location>
        <topology evidence="2">Multi-pass membrane protein</topology>
    </subcellularLocation>
</comment>
<comment type="similarity">
    <text evidence="2">Belongs to the glycosyltransferase 2 family. OpgH subfamily.</text>
</comment>
<comment type="sequence caution" evidence="3">
    <conflict type="erroneous initiation">
        <sequence resource="EMBL-CDS" id="AAN79787"/>
    </conflict>
</comment>
<keyword id="KW-0997">Cell inner membrane</keyword>
<keyword id="KW-1003">Cell membrane</keyword>
<keyword id="KW-0328">Glycosyltransferase</keyword>
<keyword id="KW-0472">Membrane</keyword>
<keyword id="KW-1185">Reference proteome</keyword>
<keyword id="KW-0808">Transferase</keyword>
<keyword id="KW-0812">Transmembrane</keyword>
<keyword id="KW-1133">Transmembrane helix</keyword>
<feature type="chain" id="PRO_0000210351" description="Glucans biosynthesis glucosyltransferase H">
    <location>
        <begin position="1"/>
        <end position="847"/>
    </location>
</feature>
<feature type="topological domain" description="Cytoplasmic" evidence="1">
    <location>
        <begin position="1"/>
        <end position="138"/>
    </location>
</feature>
<feature type="transmembrane region" description="Helical" evidence="2">
    <location>
        <begin position="139"/>
        <end position="156"/>
    </location>
</feature>
<feature type="topological domain" description="Periplasmic" evidence="1">
    <location>
        <begin position="157"/>
        <end position="193"/>
    </location>
</feature>
<feature type="transmembrane region" description="Helical" evidence="2">
    <location>
        <begin position="194"/>
        <end position="216"/>
    </location>
</feature>
<feature type="topological domain" description="Cytoplasmic" evidence="1">
    <location>
        <begin position="217"/>
        <end position="511"/>
    </location>
</feature>
<feature type="transmembrane region" description="Helical" evidence="2">
    <location>
        <begin position="512"/>
        <end position="534"/>
    </location>
</feature>
<feature type="topological domain" description="Periplasmic" evidence="1">
    <location>
        <begin position="535"/>
        <end position="567"/>
    </location>
</feature>
<feature type="transmembrane region" description="Helical" evidence="2">
    <location>
        <begin position="568"/>
        <end position="590"/>
    </location>
</feature>
<feature type="topological domain" description="Cytoplasmic" evidence="1">
    <location>
        <begin position="591"/>
        <end position="602"/>
    </location>
</feature>
<feature type="transmembrane region" description="Helical" evidence="2">
    <location>
        <begin position="603"/>
        <end position="625"/>
    </location>
</feature>
<feature type="topological domain" description="Periplasmic" evidence="1">
    <location>
        <begin position="626"/>
        <end position="679"/>
    </location>
</feature>
<feature type="transmembrane region" description="Helical" evidence="2">
    <location>
        <begin position="680"/>
        <end position="702"/>
    </location>
</feature>
<feature type="topological domain" description="Cytoplasmic" evidence="1">
    <location>
        <begin position="703"/>
        <end position="847"/>
    </location>
</feature>
<reference key="1">
    <citation type="journal article" date="2002" name="Proc. Natl. Acad. Sci. U.S.A.">
        <title>Extensive mosaic structure revealed by the complete genome sequence of uropathogenic Escherichia coli.</title>
        <authorList>
            <person name="Welch R.A."/>
            <person name="Burland V."/>
            <person name="Plunkett G. III"/>
            <person name="Redford P."/>
            <person name="Roesch P."/>
            <person name="Rasko D."/>
            <person name="Buckles E.L."/>
            <person name="Liou S.-R."/>
            <person name="Boutin A."/>
            <person name="Hackett J."/>
            <person name="Stroud D."/>
            <person name="Mayhew G.F."/>
            <person name="Rose D.J."/>
            <person name="Zhou S."/>
            <person name="Schwartz D.C."/>
            <person name="Perna N.T."/>
            <person name="Mobley H.L.T."/>
            <person name="Donnenberg M.S."/>
            <person name="Blattner F.R."/>
        </authorList>
    </citation>
    <scope>NUCLEOTIDE SEQUENCE [LARGE SCALE GENOMIC DNA]</scope>
    <source>
        <strain>CFT073 / ATCC 700928 / UPEC</strain>
    </source>
</reference>
<gene>
    <name evidence="2" type="primary">mdoH</name>
    <name evidence="2" type="synonym">opgH</name>
    <name type="ordered locus">c1314</name>
</gene>
<organism>
    <name type="scientific">Escherichia coli O6:H1 (strain CFT073 / ATCC 700928 / UPEC)</name>
    <dbReference type="NCBI Taxonomy" id="199310"/>
    <lineage>
        <taxon>Bacteria</taxon>
        <taxon>Pseudomonadati</taxon>
        <taxon>Pseudomonadota</taxon>
        <taxon>Gammaproteobacteria</taxon>
        <taxon>Enterobacterales</taxon>
        <taxon>Enterobacteriaceae</taxon>
        <taxon>Escherichia</taxon>
    </lineage>
</organism>
<sequence length="847" mass="96923">MNKTTEYIDAMPIAASEKAALPKTDIRAVHQALDAEHRTWAREDDSPQGSVKARLEQAWPDSLADGQLIKDDEGRDQLKAMPEAKRSSMFPDPWRTNPVGRFWDRLRGRDVTPRYLARLTKEEQESEQKWRTVGTIRRYILLILTLAQTVVATWYMKTILPYQGWALINPMDMVGQDVWVSFMQLLPYMLQTGILILFAVLFCWVSAGFWTALMGFLQLLIGRDKYSISASTVGDEPLNPEHRTALIMPICNEDVNRVFAGLRATWESVKATGNAKHFDVYILSDSYNPDICVAEQKAWMELIAEVGGEGQIFYRRRRRRVKRKSGNIDDFCRRWGSQYSYMVVLDADSVMTGDCLCGLVRLMEANPNAGIIQSSPKASGMDTLYARCQQFATRVYGPLFTAGLHFWQLGESHYWGHNAIIRVKPFIEHCALAPLPGEGSFAGSILSHDFVEAALMRRAGWGVWIAYDLPGSYEELPPNLLDELKRDRRWCHGNLMNFRLFLVKGMHPVHRAVFLTGVMSYLSAPLWFMFLALSTALQVVHALTEPQYFLQPRQLFPVWPQWRPELAIALFASTMVLLFLPKLLSILLIWCKGTKEYGGFWRVTLSLLLEVLFSVLLAPVRMLFHTVFVVSAFLGWEVVWNSPQRDDDSTSWGEAFKRHGSQLLLGLVWAVGMAWLDLRFLFWLAPIVFSLILSPFVSVISSRATVGLRTKRWKLFLIPEEYSPPQVLVDTDRFLEMNRQRSLDDGFMHAVFNPSFNALATAMATARHRASKVLEIARDRHVEQALNETPEKLNRDRRLVLLSDPVTMARLHFRVWNSPERYSSWVSYYEGIKLNPLALRKPDAASQ</sequence>
<evidence type="ECO:0000255" key="1"/>
<evidence type="ECO:0000255" key="2">
    <source>
        <dbReference type="HAMAP-Rule" id="MF_01072"/>
    </source>
</evidence>
<evidence type="ECO:0000305" key="3"/>
<name>OPGH_ECOL6</name>